<comment type="function">
    <text evidence="1">Required for insertion of 4Fe-4S clusters for at least IspG.</text>
</comment>
<comment type="cofactor">
    <cofactor evidence="1">
        <name>iron-sulfur cluster</name>
        <dbReference type="ChEBI" id="CHEBI:30408"/>
    </cofactor>
    <text evidence="1">Binds 1 iron-sulfur cluster per subunit.</text>
</comment>
<comment type="subunit">
    <text evidence="1">Homodimer.</text>
</comment>
<comment type="similarity">
    <text evidence="1">Belongs to the HesB/IscA family.</text>
</comment>
<reference key="1">
    <citation type="submission" date="2006-03" db="EMBL/GenBank/DDBJ databases">
        <title>Complete genome sequence of Francisella tularensis LVS (Live Vaccine Strain).</title>
        <authorList>
            <person name="Chain P."/>
            <person name="Larimer F."/>
            <person name="Land M."/>
            <person name="Stilwagen S."/>
            <person name="Larsson P."/>
            <person name="Bearden S."/>
            <person name="Chu M."/>
            <person name="Oyston P."/>
            <person name="Forsman M."/>
            <person name="Andersson S."/>
            <person name="Lindler L."/>
            <person name="Titball R."/>
            <person name="Garcia E."/>
        </authorList>
    </citation>
    <scope>NUCLEOTIDE SEQUENCE [LARGE SCALE GENOMIC DNA]</scope>
    <source>
        <strain>LVS</strain>
    </source>
</reference>
<name>ERPA_FRATH</name>
<protein>
    <recommendedName>
        <fullName evidence="1">Iron-sulfur cluster insertion protein ErpA</fullName>
    </recommendedName>
</protein>
<evidence type="ECO:0000255" key="1">
    <source>
        <dbReference type="HAMAP-Rule" id="MF_01380"/>
    </source>
</evidence>
<feature type="chain" id="PRO_0000311482" description="Iron-sulfur cluster insertion protein ErpA">
    <location>
        <begin position="1"/>
        <end position="116"/>
    </location>
</feature>
<feature type="binding site" evidence="1">
    <location>
        <position position="44"/>
    </location>
    <ligand>
        <name>iron-sulfur cluster</name>
        <dbReference type="ChEBI" id="CHEBI:30408"/>
    </ligand>
</feature>
<feature type="binding site" evidence="1">
    <location>
        <position position="108"/>
    </location>
    <ligand>
        <name>iron-sulfur cluster</name>
        <dbReference type="ChEBI" id="CHEBI:30408"/>
    </ligand>
</feature>
<feature type="binding site" evidence="1">
    <location>
        <position position="110"/>
    </location>
    <ligand>
        <name>iron-sulfur cluster</name>
        <dbReference type="ChEBI" id="CHEBI:30408"/>
    </ligand>
</feature>
<accession>Q2A270</accession>
<organism>
    <name type="scientific">Francisella tularensis subsp. holarctica (strain LVS)</name>
    <dbReference type="NCBI Taxonomy" id="376619"/>
    <lineage>
        <taxon>Bacteria</taxon>
        <taxon>Pseudomonadati</taxon>
        <taxon>Pseudomonadota</taxon>
        <taxon>Gammaproteobacteria</taxon>
        <taxon>Thiotrichales</taxon>
        <taxon>Francisellaceae</taxon>
        <taxon>Francisella</taxon>
    </lineage>
</organism>
<sequence>MSEVVQSVDPINFTEAASLKVKELIEEEGDNSLSLRVYITGGGCSGFQYAFAFDNEVKEDDMVITKNGVRLLVDSMSFQYLVGADVDYKDDVEGAYFVIRNPNAKTTCGCGSSFSV</sequence>
<dbReference type="EMBL" id="AM233362">
    <property type="protein sequence ID" value="CAJ79975.1"/>
    <property type="molecule type" value="Genomic_DNA"/>
</dbReference>
<dbReference type="RefSeq" id="WP_003016875.1">
    <property type="nucleotide sequence ID" value="NZ_CP009694.1"/>
</dbReference>
<dbReference type="SMR" id="Q2A270"/>
<dbReference type="GeneID" id="75263905"/>
<dbReference type="KEGG" id="ftl:FTL_1536"/>
<dbReference type="Proteomes" id="UP000001944">
    <property type="component" value="Chromosome"/>
</dbReference>
<dbReference type="GO" id="GO:0051537">
    <property type="term" value="F:2 iron, 2 sulfur cluster binding"/>
    <property type="evidence" value="ECO:0007669"/>
    <property type="project" value="TreeGrafter"/>
</dbReference>
<dbReference type="GO" id="GO:0051539">
    <property type="term" value="F:4 iron, 4 sulfur cluster binding"/>
    <property type="evidence" value="ECO:0007669"/>
    <property type="project" value="TreeGrafter"/>
</dbReference>
<dbReference type="GO" id="GO:0005506">
    <property type="term" value="F:iron ion binding"/>
    <property type="evidence" value="ECO:0007669"/>
    <property type="project" value="UniProtKB-UniRule"/>
</dbReference>
<dbReference type="GO" id="GO:0016226">
    <property type="term" value="P:iron-sulfur cluster assembly"/>
    <property type="evidence" value="ECO:0007669"/>
    <property type="project" value="UniProtKB-UniRule"/>
</dbReference>
<dbReference type="FunFam" id="2.60.300.12:FF:000002">
    <property type="entry name" value="Iron-sulfur cluster insertion protein ErpA"/>
    <property type="match status" value="1"/>
</dbReference>
<dbReference type="Gene3D" id="2.60.300.12">
    <property type="entry name" value="HesB-like domain"/>
    <property type="match status" value="1"/>
</dbReference>
<dbReference type="HAMAP" id="MF_01380">
    <property type="entry name" value="Fe_S_insert_ErpA"/>
    <property type="match status" value="1"/>
</dbReference>
<dbReference type="InterPro" id="IPR000361">
    <property type="entry name" value="FeS_biogenesis"/>
</dbReference>
<dbReference type="InterPro" id="IPR016092">
    <property type="entry name" value="FeS_cluster_insertion"/>
</dbReference>
<dbReference type="InterPro" id="IPR017870">
    <property type="entry name" value="FeS_cluster_insertion_CS"/>
</dbReference>
<dbReference type="InterPro" id="IPR023063">
    <property type="entry name" value="FeS_cluster_insertion_RrpA"/>
</dbReference>
<dbReference type="InterPro" id="IPR035903">
    <property type="entry name" value="HesB-like_dom_sf"/>
</dbReference>
<dbReference type="NCBIfam" id="TIGR00049">
    <property type="entry name" value="iron-sulfur cluster assembly accessory protein"/>
    <property type="match status" value="1"/>
</dbReference>
<dbReference type="NCBIfam" id="NF010147">
    <property type="entry name" value="PRK13623.1"/>
    <property type="match status" value="1"/>
</dbReference>
<dbReference type="PANTHER" id="PTHR43011">
    <property type="entry name" value="IRON-SULFUR CLUSTER ASSEMBLY 2 HOMOLOG, MITOCHONDRIAL"/>
    <property type="match status" value="1"/>
</dbReference>
<dbReference type="PANTHER" id="PTHR43011:SF1">
    <property type="entry name" value="IRON-SULFUR CLUSTER ASSEMBLY 2 HOMOLOG, MITOCHONDRIAL"/>
    <property type="match status" value="1"/>
</dbReference>
<dbReference type="Pfam" id="PF01521">
    <property type="entry name" value="Fe-S_biosyn"/>
    <property type="match status" value="1"/>
</dbReference>
<dbReference type="SUPFAM" id="SSF89360">
    <property type="entry name" value="HesB-like domain"/>
    <property type="match status" value="1"/>
</dbReference>
<dbReference type="PROSITE" id="PS01152">
    <property type="entry name" value="HESB"/>
    <property type="match status" value="1"/>
</dbReference>
<keyword id="KW-0408">Iron</keyword>
<keyword id="KW-0411">Iron-sulfur</keyword>
<keyword id="KW-0479">Metal-binding</keyword>
<keyword id="KW-1185">Reference proteome</keyword>
<gene>
    <name evidence="1" type="primary">erpA</name>
    <name type="ordered locus">FTL_1536</name>
</gene>
<proteinExistence type="inferred from homology"/>